<keyword id="KW-0878">Amphibian defense peptide</keyword>
<keyword id="KW-0044">Antibiotic</keyword>
<keyword id="KW-0929">Antimicrobial</keyword>
<keyword id="KW-0204">Cytolysis</keyword>
<keyword id="KW-0903">Direct protein sequencing</keyword>
<keyword id="KW-1015">Disulfide bond</keyword>
<keyword id="KW-0354">Hemolysis</keyword>
<keyword id="KW-0964">Secreted</keyword>
<comment type="function">
    <text>Shows antibacterial activity against representative Gram-negative and Gram-positive bacterial species, and a very high hemolytic activity.</text>
</comment>
<comment type="subcellular location">
    <subcellularLocation>
        <location evidence="1">Secreted</location>
    </subcellularLocation>
</comment>
<comment type="tissue specificity">
    <text evidence="4">Expressed by the skin glands.</text>
</comment>
<comment type="similarity">
    <text evidence="3">Belongs to the frog skin active peptide (FSAP) family. Brevinin subfamily.</text>
</comment>
<comment type="online information" name="The antimicrobial peptide database">
    <link uri="https://wangapd3.com/database/query_output.php?ID=00072"/>
</comment>
<organism>
    <name type="scientific">Pelophylax lessonae</name>
    <name type="common">Pool frog</name>
    <name type="synonym">Rana lessonae</name>
    <dbReference type="NCBI Taxonomy" id="45623"/>
    <lineage>
        <taxon>Eukaryota</taxon>
        <taxon>Metazoa</taxon>
        <taxon>Chordata</taxon>
        <taxon>Craniata</taxon>
        <taxon>Vertebrata</taxon>
        <taxon>Euteleostomi</taxon>
        <taxon>Amphibia</taxon>
        <taxon>Batrachia</taxon>
        <taxon>Anura</taxon>
        <taxon>Neobatrachia</taxon>
        <taxon>Ranoidea</taxon>
        <taxon>Ranidae</taxon>
        <taxon>Pelophylax</taxon>
    </lineage>
</organism>
<feature type="peptide" id="PRO_0000043536" description="Brevinin-1Eb" evidence="1">
    <location>
        <begin position="1"/>
        <end position="23"/>
    </location>
</feature>
<feature type="disulfide bond" evidence="1">
    <location>
        <begin position="17"/>
        <end position="23"/>
    </location>
</feature>
<reference key="1">
    <citation type="journal article" date="1994" name="J. Biol. Chem.">
        <title>Antimicrobial peptides from skin secretions of Rana esculenta. Molecular cloning of cDNAs encoding esculentin and brevinins and isolation of new active peptides.</title>
        <authorList>
            <person name="Simmaco M."/>
            <person name="Mignogna G."/>
            <person name="Barra D."/>
            <person name="Bossa F."/>
        </authorList>
    </citation>
    <scope>PROTEIN SEQUENCE</scope>
    <scope>DISULFIDE BOND</scope>
    <scope>SUBCELLULAR LOCATION</scope>
    <source>
        <tissue>Skin secretion</tissue>
    </source>
</reference>
<accession>P40836</accession>
<name>BR1B_PELLE</name>
<protein>
    <recommendedName>
        <fullName evidence="2">Brevinin-1Eb</fullName>
    </recommendedName>
</protein>
<sequence>VIPFVASVAAEMQHVYCAASRKC</sequence>
<proteinExistence type="evidence at protein level"/>
<dbReference type="PIR" id="I53578">
    <property type="entry name" value="I53578"/>
</dbReference>
<dbReference type="GO" id="GO:0005576">
    <property type="term" value="C:extracellular region"/>
    <property type="evidence" value="ECO:0007669"/>
    <property type="project" value="UniProtKB-SubCell"/>
</dbReference>
<dbReference type="GO" id="GO:0042742">
    <property type="term" value="P:defense response to bacterium"/>
    <property type="evidence" value="ECO:0007669"/>
    <property type="project" value="UniProtKB-KW"/>
</dbReference>
<dbReference type="GO" id="GO:0031640">
    <property type="term" value="P:killing of cells of another organism"/>
    <property type="evidence" value="ECO:0007669"/>
    <property type="project" value="UniProtKB-KW"/>
</dbReference>
<dbReference type="InterPro" id="IPR012520">
    <property type="entry name" value="Antimicrobial_frog_1"/>
</dbReference>
<dbReference type="Pfam" id="PF08018">
    <property type="entry name" value="Antimicrobial_1"/>
    <property type="match status" value="1"/>
</dbReference>
<evidence type="ECO:0000269" key="1">
    <source>
    </source>
</evidence>
<evidence type="ECO:0000303" key="2">
    <source>
    </source>
</evidence>
<evidence type="ECO:0000305" key="3"/>
<evidence type="ECO:0000305" key="4">
    <source>
    </source>
</evidence>